<organism>
    <name type="scientific">Shigella flexneri</name>
    <dbReference type="NCBI Taxonomy" id="623"/>
    <lineage>
        <taxon>Bacteria</taxon>
        <taxon>Pseudomonadati</taxon>
        <taxon>Pseudomonadota</taxon>
        <taxon>Gammaproteobacteria</taxon>
        <taxon>Enterobacterales</taxon>
        <taxon>Enterobacteriaceae</taxon>
        <taxon>Shigella</taxon>
    </lineage>
</organism>
<proteinExistence type="inferred from homology"/>
<name>RNC_SHIFL</name>
<gene>
    <name evidence="1" type="primary">rnc</name>
    <name type="ordered locus">SF2629</name>
    <name type="ordered locus">S2802</name>
</gene>
<evidence type="ECO:0000255" key="1">
    <source>
        <dbReference type="HAMAP-Rule" id="MF_00104"/>
    </source>
</evidence>
<comment type="function">
    <text evidence="1">Digests double-stranded RNA. Involved in the processing of primary rRNA transcript to yield the immediate precursors to the large and small rRNAs (23S and 16S). Processes some mRNAs, and tRNAs when they are encoded in the rRNA operon. Processes pre-crRNA and tracrRNA of type II CRISPR loci if present in the organism.</text>
</comment>
<comment type="catalytic activity">
    <reaction evidence="1">
        <text>Endonucleolytic cleavage to 5'-phosphomonoester.</text>
        <dbReference type="EC" id="3.1.26.3"/>
    </reaction>
</comment>
<comment type="cofactor">
    <cofactor evidence="1">
        <name>Mg(2+)</name>
        <dbReference type="ChEBI" id="CHEBI:18420"/>
    </cofactor>
</comment>
<comment type="subunit">
    <text evidence="1">Homodimer.</text>
</comment>
<comment type="subcellular location">
    <subcellularLocation>
        <location evidence="1">Cytoplasm</location>
    </subcellularLocation>
</comment>
<comment type="similarity">
    <text evidence="1">Belongs to the ribonuclease III family.</text>
</comment>
<dbReference type="EC" id="3.1.26.3" evidence="1"/>
<dbReference type="EMBL" id="AE005674">
    <property type="protein sequence ID" value="AAN44126.1"/>
    <property type="molecule type" value="Genomic_DNA"/>
</dbReference>
<dbReference type="EMBL" id="AE014073">
    <property type="protein sequence ID" value="AAP17950.1"/>
    <property type="molecule type" value="Genomic_DNA"/>
</dbReference>
<dbReference type="RefSeq" id="NP_708419.1">
    <property type="nucleotide sequence ID" value="NC_004337.2"/>
</dbReference>
<dbReference type="RefSeq" id="WP_001068343.1">
    <property type="nucleotide sequence ID" value="NZ_WPGW01000044.1"/>
</dbReference>
<dbReference type="SMR" id="P0A7Y3"/>
<dbReference type="STRING" id="198214.SF2629"/>
<dbReference type="PaxDb" id="198214-SF2629"/>
<dbReference type="GeneID" id="1023569"/>
<dbReference type="GeneID" id="93774524"/>
<dbReference type="KEGG" id="sfl:SF2629"/>
<dbReference type="KEGG" id="sfx:S2802"/>
<dbReference type="PATRIC" id="fig|198214.7.peg.3137"/>
<dbReference type="HOGENOM" id="CLU_000907_1_1_6"/>
<dbReference type="Proteomes" id="UP000001006">
    <property type="component" value="Chromosome"/>
</dbReference>
<dbReference type="Proteomes" id="UP000002673">
    <property type="component" value="Chromosome"/>
</dbReference>
<dbReference type="GO" id="GO:0005737">
    <property type="term" value="C:cytoplasm"/>
    <property type="evidence" value="ECO:0007669"/>
    <property type="project" value="UniProtKB-SubCell"/>
</dbReference>
<dbReference type="GO" id="GO:0003725">
    <property type="term" value="F:double-stranded RNA binding"/>
    <property type="evidence" value="ECO:0007669"/>
    <property type="project" value="TreeGrafter"/>
</dbReference>
<dbReference type="GO" id="GO:0046872">
    <property type="term" value="F:metal ion binding"/>
    <property type="evidence" value="ECO:0007669"/>
    <property type="project" value="UniProtKB-KW"/>
</dbReference>
<dbReference type="GO" id="GO:0004525">
    <property type="term" value="F:ribonuclease III activity"/>
    <property type="evidence" value="ECO:0007669"/>
    <property type="project" value="UniProtKB-UniRule"/>
</dbReference>
<dbReference type="GO" id="GO:0019843">
    <property type="term" value="F:rRNA binding"/>
    <property type="evidence" value="ECO:0007669"/>
    <property type="project" value="UniProtKB-KW"/>
</dbReference>
<dbReference type="GO" id="GO:0006397">
    <property type="term" value="P:mRNA processing"/>
    <property type="evidence" value="ECO:0007669"/>
    <property type="project" value="UniProtKB-UniRule"/>
</dbReference>
<dbReference type="GO" id="GO:0010468">
    <property type="term" value="P:regulation of gene expression"/>
    <property type="evidence" value="ECO:0007669"/>
    <property type="project" value="TreeGrafter"/>
</dbReference>
<dbReference type="GO" id="GO:0006364">
    <property type="term" value="P:rRNA processing"/>
    <property type="evidence" value="ECO:0007669"/>
    <property type="project" value="UniProtKB-UniRule"/>
</dbReference>
<dbReference type="GO" id="GO:0008033">
    <property type="term" value="P:tRNA processing"/>
    <property type="evidence" value="ECO:0007669"/>
    <property type="project" value="UniProtKB-KW"/>
</dbReference>
<dbReference type="CDD" id="cd10845">
    <property type="entry name" value="DSRM_RNAse_III_family"/>
    <property type="match status" value="1"/>
</dbReference>
<dbReference type="CDD" id="cd00593">
    <property type="entry name" value="RIBOc"/>
    <property type="match status" value="1"/>
</dbReference>
<dbReference type="FunFam" id="1.10.1520.10:FF:000001">
    <property type="entry name" value="Ribonuclease 3"/>
    <property type="match status" value="1"/>
</dbReference>
<dbReference type="FunFam" id="3.30.160.20:FF:000003">
    <property type="entry name" value="Ribonuclease 3"/>
    <property type="match status" value="1"/>
</dbReference>
<dbReference type="Gene3D" id="3.30.160.20">
    <property type="match status" value="1"/>
</dbReference>
<dbReference type="Gene3D" id="1.10.1520.10">
    <property type="entry name" value="Ribonuclease III domain"/>
    <property type="match status" value="1"/>
</dbReference>
<dbReference type="HAMAP" id="MF_00104">
    <property type="entry name" value="RNase_III"/>
    <property type="match status" value="1"/>
</dbReference>
<dbReference type="InterPro" id="IPR014720">
    <property type="entry name" value="dsRBD_dom"/>
</dbReference>
<dbReference type="InterPro" id="IPR011907">
    <property type="entry name" value="RNase_III"/>
</dbReference>
<dbReference type="InterPro" id="IPR000999">
    <property type="entry name" value="RNase_III_dom"/>
</dbReference>
<dbReference type="InterPro" id="IPR036389">
    <property type="entry name" value="RNase_III_sf"/>
</dbReference>
<dbReference type="NCBIfam" id="TIGR02191">
    <property type="entry name" value="RNaseIII"/>
    <property type="match status" value="1"/>
</dbReference>
<dbReference type="PANTHER" id="PTHR11207:SF0">
    <property type="entry name" value="RIBONUCLEASE 3"/>
    <property type="match status" value="1"/>
</dbReference>
<dbReference type="PANTHER" id="PTHR11207">
    <property type="entry name" value="RIBONUCLEASE III"/>
    <property type="match status" value="1"/>
</dbReference>
<dbReference type="Pfam" id="PF00035">
    <property type="entry name" value="dsrm"/>
    <property type="match status" value="1"/>
</dbReference>
<dbReference type="Pfam" id="PF14622">
    <property type="entry name" value="Ribonucleas_3_3"/>
    <property type="match status" value="1"/>
</dbReference>
<dbReference type="SMART" id="SM00358">
    <property type="entry name" value="DSRM"/>
    <property type="match status" value="1"/>
</dbReference>
<dbReference type="SMART" id="SM00535">
    <property type="entry name" value="RIBOc"/>
    <property type="match status" value="1"/>
</dbReference>
<dbReference type="SUPFAM" id="SSF54768">
    <property type="entry name" value="dsRNA-binding domain-like"/>
    <property type="match status" value="1"/>
</dbReference>
<dbReference type="SUPFAM" id="SSF69065">
    <property type="entry name" value="RNase III domain-like"/>
    <property type="match status" value="1"/>
</dbReference>
<dbReference type="PROSITE" id="PS50137">
    <property type="entry name" value="DS_RBD"/>
    <property type="match status" value="1"/>
</dbReference>
<dbReference type="PROSITE" id="PS00517">
    <property type="entry name" value="RNASE_3_1"/>
    <property type="match status" value="1"/>
</dbReference>
<dbReference type="PROSITE" id="PS50142">
    <property type="entry name" value="RNASE_3_2"/>
    <property type="match status" value="1"/>
</dbReference>
<reference key="1">
    <citation type="journal article" date="2002" name="Nucleic Acids Res.">
        <title>Genome sequence of Shigella flexneri 2a: insights into pathogenicity through comparison with genomes of Escherichia coli K12 and O157.</title>
        <authorList>
            <person name="Jin Q."/>
            <person name="Yuan Z."/>
            <person name="Xu J."/>
            <person name="Wang Y."/>
            <person name="Shen Y."/>
            <person name="Lu W."/>
            <person name="Wang J."/>
            <person name="Liu H."/>
            <person name="Yang J."/>
            <person name="Yang F."/>
            <person name="Zhang X."/>
            <person name="Zhang J."/>
            <person name="Yang G."/>
            <person name="Wu H."/>
            <person name="Qu D."/>
            <person name="Dong J."/>
            <person name="Sun L."/>
            <person name="Xue Y."/>
            <person name="Zhao A."/>
            <person name="Gao Y."/>
            <person name="Zhu J."/>
            <person name="Kan B."/>
            <person name="Ding K."/>
            <person name="Chen S."/>
            <person name="Cheng H."/>
            <person name="Yao Z."/>
            <person name="He B."/>
            <person name="Chen R."/>
            <person name="Ma D."/>
            <person name="Qiang B."/>
            <person name="Wen Y."/>
            <person name="Hou Y."/>
            <person name="Yu J."/>
        </authorList>
    </citation>
    <scope>NUCLEOTIDE SEQUENCE [LARGE SCALE GENOMIC DNA]</scope>
    <source>
        <strain>301 / Serotype 2a</strain>
    </source>
</reference>
<reference key="2">
    <citation type="journal article" date="2003" name="Infect. Immun.">
        <title>Complete genome sequence and comparative genomics of Shigella flexneri serotype 2a strain 2457T.</title>
        <authorList>
            <person name="Wei J."/>
            <person name="Goldberg M.B."/>
            <person name="Burland V."/>
            <person name="Venkatesan M.M."/>
            <person name="Deng W."/>
            <person name="Fournier G."/>
            <person name="Mayhew G.F."/>
            <person name="Plunkett G. III"/>
            <person name="Rose D.J."/>
            <person name="Darling A."/>
            <person name="Mau B."/>
            <person name="Perna N.T."/>
            <person name="Payne S.M."/>
            <person name="Runyen-Janecky L.J."/>
            <person name="Zhou S."/>
            <person name="Schwartz D.C."/>
            <person name="Blattner F.R."/>
        </authorList>
    </citation>
    <scope>NUCLEOTIDE SEQUENCE [LARGE SCALE GENOMIC DNA]</scope>
    <source>
        <strain>ATCC 700930 / 2457T / Serotype 2a</strain>
    </source>
</reference>
<keyword id="KW-0963">Cytoplasm</keyword>
<keyword id="KW-0255">Endonuclease</keyword>
<keyword id="KW-0378">Hydrolase</keyword>
<keyword id="KW-0460">Magnesium</keyword>
<keyword id="KW-0479">Metal-binding</keyword>
<keyword id="KW-0507">mRNA processing</keyword>
<keyword id="KW-0540">Nuclease</keyword>
<keyword id="KW-1185">Reference proteome</keyword>
<keyword id="KW-0694">RNA-binding</keyword>
<keyword id="KW-0698">rRNA processing</keyword>
<keyword id="KW-0699">rRNA-binding</keyword>
<keyword id="KW-0819">tRNA processing</keyword>
<accession>P0A7Y3</accession>
<accession>P05797</accession>
<accession>P06141</accession>
<sequence>MNPIVINRLQRKLGYTFNHQELLQQALTHRSASSKHNERLEFLGDSILSYVIANALYHRFPRVDEGDMSRMRATLVRGNTLAELAREFELGECLRLGPGELKSGGFRRESILADTVEALIGGVFLDSDIQTVEKLILNWYQTRLDEISPGDKQKDPKTRLQEYLQGRHLPLPTYLVVQVRGEAHDQEFTIHCQVSGLSEPVVGTGSSRRKAEQAAAEQALKKLELE</sequence>
<protein>
    <recommendedName>
        <fullName evidence="1">Ribonuclease 3</fullName>
        <ecNumber evidence="1">3.1.26.3</ecNumber>
    </recommendedName>
    <alternativeName>
        <fullName evidence="1">Ribonuclease III</fullName>
        <shortName evidence="1">RNase III</shortName>
    </alternativeName>
</protein>
<feature type="chain" id="PRO_0000180430" description="Ribonuclease 3">
    <location>
        <begin position="1"/>
        <end position="226"/>
    </location>
</feature>
<feature type="domain" description="RNase III" evidence="1">
    <location>
        <begin position="6"/>
        <end position="128"/>
    </location>
</feature>
<feature type="domain" description="DRBM" evidence="1">
    <location>
        <begin position="155"/>
        <end position="225"/>
    </location>
</feature>
<feature type="active site" evidence="1">
    <location>
        <position position="45"/>
    </location>
</feature>
<feature type="active site" evidence="1">
    <location>
        <position position="117"/>
    </location>
</feature>
<feature type="binding site" evidence="1">
    <location>
        <position position="41"/>
    </location>
    <ligand>
        <name>Mg(2+)</name>
        <dbReference type="ChEBI" id="CHEBI:18420"/>
    </ligand>
</feature>
<feature type="binding site" evidence="1">
    <location>
        <position position="114"/>
    </location>
    <ligand>
        <name>Mg(2+)</name>
        <dbReference type="ChEBI" id="CHEBI:18420"/>
    </ligand>
</feature>
<feature type="binding site" evidence="1">
    <location>
        <position position="117"/>
    </location>
    <ligand>
        <name>Mg(2+)</name>
        <dbReference type="ChEBI" id="CHEBI:18420"/>
    </ligand>
</feature>